<gene>
    <name evidence="1" type="primary">clpS</name>
    <name type="ordered locus">SPA1855</name>
</gene>
<name>CLPS_SALPA</name>
<protein>
    <recommendedName>
        <fullName evidence="1">ATP-dependent Clp protease adapter protein ClpS</fullName>
    </recommendedName>
</protein>
<accession>Q5PGK0</accession>
<dbReference type="EMBL" id="CP000026">
    <property type="protein sequence ID" value="AAV77766.1"/>
    <property type="molecule type" value="Genomic_DNA"/>
</dbReference>
<dbReference type="RefSeq" id="WP_000520789.1">
    <property type="nucleotide sequence ID" value="NC_006511.1"/>
</dbReference>
<dbReference type="SMR" id="Q5PGK0"/>
<dbReference type="KEGG" id="spt:SPA1855"/>
<dbReference type="HOGENOM" id="CLU_134358_2_1_6"/>
<dbReference type="Proteomes" id="UP000008185">
    <property type="component" value="Chromosome"/>
</dbReference>
<dbReference type="GO" id="GO:0030163">
    <property type="term" value="P:protein catabolic process"/>
    <property type="evidence" value="ECO:0007669"/>
    <property type="project" value="InterPro"/>
</dbReference>
<dbReference type="GO" id="GO:0006508">
    <property type="term" value="P:proteolysis"/>
    <property type="evidence" value="ECO:0007669"/>
    <property type="project" value="UniProtKB-UniRule"/>
</dbReference>
<dbReference type="FunFam" id="3.30.1390.10:FF:000002">
    <property type="entry name" value="ATP-dependent Clp protease adapter protein ClpS"/>
    <property type="match status" value="1"/>
</dbReference>
<dbReference type="Gene3D" id="3.30.1390.10">
    <property type="match status" value="1"/>
</dbReference>
<dbReference type="HAMAP" id="MF_00302">
    <property type="entry name" value="ClpS"/>
    <property type="match status" value="1"/>
</dbReference>
<dbReference type="InterPro" id="IPR022935">
    <property type="entry name" value="ClpS"/>
</dbReference>
<dbReference type="InterPro" id="IPR003769">
    <property type="entry name" value="ClpS_core"/>
</dbReference>
<dbReference type="InterPro" id="IPR014719">
    <property type="entry name" value="Ribosomal_bL12_C/ClpS-like"/>
</dbReference>
<dbReference type="NCBIfam" id="NF000670">
    <property type="entry name" value="PRK00033.1-3"/>
    <property type="match status" value="1"/>
</dbReference>
<dbReference type="NCBIfam" id="NF000672">
    <property type="entry name" value="PRK00033.1-5"/>
    <property type="match status" value="1"/>
</dbReference>
<dbReference type="PANTHER" id="PTHR33473:SF19">
    <property type="entry name" value="ATP-DEPENDENT CLP PROTEASE ADAPTER PROTEIN CLPS"/>
    <property type="match status" value="1"/>
</dbReference>
<dbReference type="PANTHER" id="PTHR33473">
    <property type="entry name" value="ATP-DEPENDENT CLP PROTEASE ADAPTER PROTEIN CLPS1, CHLOROPLASTIC"/>
    <property type="match status" value="1"/>
</dbReference>
<dbReference type="Pfam" id="PF02617">
    <property type="entry name" value="ClpS"/>
    <property type="match status" value="1"/>
</dbReference>
<dbReference type="SUPFAM" id="SSF54736">
    <property type="entry name" value="ClpS-like"/>
    <property type="match status" value="1"/>
</dbReference>
<sequence length="106" mass="12152">MGKTNDWLDFDQLVEDSVRDALKPPSMYKVILVNDDYTPMEFVIDVLQKFFSYDVERATQLMLAVHYQGKAICGVFTAEVAETKVAMVNKYARENEHPLLCTLEKA</sequence>
<feature type="chain" id="PRO_0000215745" description="ATP-dependent Clp protease adapter protein ClpS">
    <location>
        <begin position="1"/>
        <end position="106"/>
    </location>
</feature>
<proteinExistence type="inferred from homology"/>
<organism>
    <name type="scientific">Salmonella paratyphi A (strain ATCC 9150 / SARB42)</name>
    <dbReference type="NCBI Taxonomy" id="295319"/>
    <lineage>
        <taxon>Bacteria</taxon>
        <taxon>Pseudomonadati</taxon>
        <taxon>Pseudomonadota</taxon>
        <taxon>Gammaproteobacteria</taxon>
        <taxon>Enterobacterales</taxon>
        <taxon>Enterobacteriaceae</taxon>
        <taxon>Salmonella</taxon>
    </lineage>
</organism>
<evidence type="ECO:0000255" key="1">
    <source>
        <dbReference type="HAMAP-Rule" id="MF_00302"/>
    </source>
</evidence>
<reference key="1">
    <citation type="journal article" date="2004" name="Nat. Genet.">
        <title>Comparison of genome degradation in Paratyphi A and Typhi, human-restricted serovars of Salmonella enterica that cause typhoid.</title>
        <authorList>
            <person name="McClelland M."/>
            <person name="Sanderson K.E."/>
            <person name="Clifton S.W."/>
            <person name="Latreille P."/>
            <person name="Porwollik S."/>
            <person name="Sabo A."/>
            <person name="Meyer R."/>
            <person name="Bieri T."/>
            <person name="Ozersky P."/>
            <person name="McLellan M."/>
            <person name="Harkins C.R."/>
            <person name="Wang C."/>
            <person name="Nguyen C."/>
            <person name="Berghoff A."/>
            <person name="Elliott G."/>
            <person name="Kohlberg S."/>
            <person name="Strong C."/>
            <person name="Du F."/>
            <person name="Carter J."/>
            <person name="Kremizki C."/>
            <person name="Layman D."/>
            <person name="Leonard S."/>
            <person name="Sun H."/>
            <person name="Fulton L."/>
            <person name="Nash W."/>
            <person name="Miner T."/>
            <person name="Minx P."/>
            <person name="Delehaunty K."/>
            <person name="Fronick C."/>
            <person name="Magrini V."/>
            <person name="Nhan M."/>
            <person name="Warren W."/>
            <person name="Florea L."/>
            <person name="Spieth J."/>
            <person name="Wilson R.K."/>
        </authorList>
    </citation>
    <scope>NUCLEOTIDE SEQUENCE [LARGE SCALE GENOMIC DNA]</scope>
    <source>
        <strain>ATCC 9150 / SARB42</strain>
    </source>
</reference>
<comment type="function">
    <text evidence="1">Involved in the modulation of the specificity of the ClpAP-mediated ATP-dependent protein degradation.</text>
</comment>
<comment type="subunit">
    <text evidence="1">Binds to the N-terminal domain of the chaperone ClpA.</text>
</comment>
<comment type="similarity">
    <text evidence="1">Belongs to the ClpS family.</text>
</comment>